<comment type="function">
    <text evidence="2 3">Component of the serine palmitoyltransferase multisubunit enzyme (SPT) that catalyzes the initial and rate-limiting step in sphingolipid biosynthesis by condensing L-serine and activated acyl-CoA (most commonly palmitoyl-CoA) to form long-chain bases. The SPT complex is also composed of SPTLC2 or SPTLC3 and SPTSSA or SPTSSB. Within this complex, the heterodimer with SPTLC2 or SPTLC3 forms the catalytic core. The composition of the serine palmitoyltransferase (SPT) complex determines the substrate preference. The SPTLC1-SPTLC2-SPTSSA complex shows a strong preference for C16-CoA substrate, while the SPTLC1-SPTLC3-SPTSSA isozyme uses both C14-CoA and C16-CoA as substrates, with a slight preference for C14-CoA. The SPTLC1-SPTLC2-SPTSSB complex shows a strong preference for C18-CoA substrate, while the SPTLC1-SPTLC3-SPTSSB isozyme displays an ability to use a broader range of acyl-CoAs, without apparent preference (By similarity). Required for adipocyte cell viability and metabolic homeostasis (By similarity).</text>
</comment>
<comment type="catalytic activity">
    <reaction evidence="2">
        <text>L-serine + hexadecanoyl-CoA + H(+) = 3-oxosphinganine + CO2 + CoA</text>
        <dbReference type="Rhea" id="RHEA:14761"/>
        <dbReference type="ChEBI" id="CHEBI:15378"/>
        <dbReference type="ChEBI" id="CHEBI:16526"/>
        <dbReference type="ChEBI" id="CHEBI:33384"/>
        <dbReference type="ChEBI" id="CHEBI:57287"/>
        <dbReference type="ChEBI" id="CHEBI:57379"/>
        <dbReference type="ChEBI" id="CHEBI:58299"/>
        <dbReference type="EC" id="2.3.1.50"/>
    </reaction>
    <physiologicalReaction direction="left-to-right" evidence="2">
        <dbReference type="Rhea" id="RHEA:14762"/>
    </physiologicalReaction>
</comment>
<comment type="catalytic activity">
    <reaction evidence="2">
        <text>octadecanoyl-CoA + L-serine + H(+) = 3-oxoeicosasphinganine + CO2 + CoA</text>
        <dbReference type="Rhea" id="RHEA:33683"/>
        <dbReference type="ChEBI" id="CHEBI:15378"/>
        <dbReference type="ChEBI" id="CHEBI:16526"/>
        <dbReference type="ChEBI" id="CHEBI:33384"/>
        <dbReference type="ChEBI" id="CHEBI:57287"/>
        <dbReference type="ChEBI" id="CHEBI:57394"/>
        <dbReference type="ChEBI" id="CHEBI:65073"/>
    </reaction>
    <physiologicalReaction direction="left-to-right" evidence="2">
        <dbReference type="Rhea" id="RHEA:33684"/>
    </physiologicalReaction>
</comment>
<comment type="catalytic activity">
    <reaction evidence="2">
        <text>tetradecanoyl-CoA + L-serine + H(+) = 3-oxohexadecasphinganine + CO2 + CoA</text>
        <dbReference type="Rhea" id="RHEA:35675"/>
        <dbReference type="ChEBI" id="CHEBI:15378"/>
        <dbReference type="ChEBI" id="CHEBI:16526"/>
        <dbReference type="ChEBI" id="CHEBI:33384"/>
        <dbReference type="ChEBI" id="CHEBI:57287"/>
        <dbReference type="ChEBI" id="CHEBI:57385"/>
        <dbReference type="ChEBI" id="CHEBI:71007"/>
    </reaction>
    <physiologicalReaction direction="left-to-right" evidence="2">
        <dbReference type="Rhea" id="RHEA:35676"/>
    </physiologicalReaction>
</comment>
<comment type="catalytic activity">
    <reaction evidence="2">
        <text>dodecanoyl-CoA + L-serine + H(+) = 3-oxotetradecasphinganine + CO2 + CoA</text>
        <dbReference type="Rhea" id="RHEA:35679"/>
        <dbReference type="ChEBI" id="CHEBI:15378"/>
        <dbReference type="ChEBI" id="CHEBI:16526"/>
        <dbReference type="ChEBI" id="CHEBI:33384"/>
        <dbReference type="ChEBI" id="CHEBI:57287"/>
        <dbReference type="ChEBI" id="CHEBI:57375"/>
        <dbReference type="ChEBI" id="CHEBI:71008"/>
    </reaction>
    <physiologicalReaction direction="left-to-right" evidence="2">
        <dbReference type="Rhea" id="RHEA:35680"/>
    </physiologicalReaction>
</comment>
<comment type="cofactor">
    <cofactor evidence="1">
        <name>pyridoxal 5'-phosphate</name>
        <dbReference type="ChEBI" id="CHEBI:597326"/>
    </cofactor>
</comment>
<comment type="activity regulation">
    <text evidence="2 6">SPT complex catalytic activity is negatively regulated by ORMDL proteins, including ORMDL3, in the presence of ceramides (By similarity). This mechanism allows to maintain ceramide levels at sufficient concentrations for the production of complex sphingolipids, but which prevents the accumulation of ceramides to levels that trigger apoptosis (Probable).</text>
</comment>
<comment type="pathway">
    <text evidence="2">Lipid metabolism; sphingolipid metabolism.</text>
</comment>
<comment type="subunit">
    <text evidence="2 3">Component of the serine palmitoyltransferase (SPT) complex, which is also composed of SPTLC2 or SPTLC3 and SPTSSA or SPTSSB (By similarity). The heterodimer with SPTLC2 or SPTLC3 forms the catalytic core of the enzyme, while SPTSSA or SPTSSB subunits determine substrate specificity (By similarity). SPT also interacts with ORMDL proteins, especially ORMDL3, which negatively regulate SPT activity in the presence of ceramides (By similarity). Forms dimers of heterodimers with SPTLC2 (By similarity). Interacts with RTN4 (isoform B) (By similarity).</text>
</comment>
<comment type="subcellular location">
    <subcellularLocation>
        <location evidence="3">Endoplasmic reticulum membrane</location>
        <topology evidence="3">Single-pass membrane protein</topology>
    </subcellularLocation>
</comment>
<comment type="tissue specificity">
    <text evidence="5">Expressed in astrocytes.</text>
</comment>
<comment type="induction">
    <text evidence="5">Expression in increased by palmitate at the protein level, but not at the mRNA level (PubMed:21994399). Expression is down-regulated by microRNA miR-137 and miR-181c (at protein level) (PubMed:21994399).</text>
</comment>
<comment type="domain">
    <text evidence="2">The transmembrane domain is involved in the interaction with ORMDL3.</text>
</comment>
<comment type="PTM">
    <text evidence="2">Phosphorylation at Tyr-164 inhibits activity and promotes cell survival.</text>
</comment>
<comment type="similarity">
    <text evidence="6">Belongs to the class-II pyridoxal-phosphate-dependent aminotransferase family.</text>
</comment>
<proteinExistence type="evidence at protein level"/>
<evidence type="ECO:0000250" key="1"/>
<evidence type="ECO:0000250" key="2">
    <source>
        <dbReference type="UniProtKB" id="O15269"/>
    </source>
</evidence>
<evidence type="ECO:0000250" key="3">
    <source>
        <dbReference type="UniProtKB" id="O35704"/>
    </source>
</evidence>
<evidence type="ECO:0000255" key="4"/>
<evidence type="ECO:0000269" key="5">
    <source>
    </source>
</evidence>
<evidence type="ECO:0000305" key="6"/>
<evidence type="ECO:0000312" key="7">
    <source>
        <dbReference type="RGD" id="1307140"/>
    </source>
</evidence>
<sequence length="473" mass="52549">MATVAEQWVLVEMVQALYEAPAYHLILEGILILWIIRLVFSKTYKLQERSDLTAKEKEELIEEWQPEPLVPPVSRNHPALNYNIVSGPPTHNIVVNGKECVNFASFNFLGLLANPRVKAAAFASLKKYGVGTCGPRGFYGTFDVHLDLEERLAKFMKTEEAIIYSYGFSTIASAIPAYSKRGDIVFVDSAACFAIQKGLQASRSDIKLFKHNDVADLERLLKEQEIEDQKNPRKARVTRRFIVAEGLYMNTGTICPLPELVRLKYKYKARIFLEESLSFGVLGEHGRGVTEHYGISIDDIDLISANMENALASVGGFCCGRSFVVDHQRLSGQGYCFSASLPPLLAAAAIEALNIMEENPGIFAVLKKKCQTIHKSLQGVSGLKVVGESLCPALHLQLEESTGSRERDMKLLQEIVEQCMNKGIALTQARYLDKEEKCLPPPSIRVVVTVEQTDEELQRAAATIREAAQAVLL</sequence>
<protein>
    <recommendedName>
        <fullName evidence="6">Serine palmitoyltransferase 1</fullName>
        <ecNumber evidence="2">2.3.1.50</ecNumber>
    </recommendedName>
    <alternativeName>
        <fullName>Long chain base biosynthesis protein 1</fullName>
        <shortName>LCB 1</shortName>
    </alternativeName>
    <alternativeName>
        <fullName>Serine-palmitoyl-CoA transferase 1</fullName>
        <shortName>SPT 1</shortName>
        <shortName>SPT1</shortName>
    </alternativeName>
</protein>
<keyword id="KW-0012">Acyltransferase</keyword>
<keyword id="KW-0175">Coiled coil</keyword>
<keyword id="KW-0256">Endoplasmic reticulum</keyword>
<keyword id="KW-0443">Lipid metabolism</keyword>
<keyword id="KW-0472">Membrane</keyword>
<keyword id="KW-0597">Phosphoprotein</keyword>
<keyword id="KW-0663">Pyridoxal phosphate</keyword>
<keyword id="KW-1185">Reference proteome</keyword>
<keyword id="KW-0746">Sphingolipid metabolism</keyword>
<keyword id="KW-0808">Transferase</keyword>
<keyword id="KW-0812">Transmembrane</keyword>
<keyword id="KW-1133">Transmembrane helix</keyword>
<reference key="1">
    <citation type="journal article" date="2004" name="Nature">
        <title>Genome sequence of the Brown Norway rat yields insights into mammalian evolution.</title>
        <authorList>
            <person name="Gibbs R.A."/>
            <person name="Weinstock G.M."/>
            <person name="Metzker M.L."/>
            <person name="Muzny D.M."/>
            <person name="Sodergren E.J."/>
            <person name="Scherer S."/>
            <person name="Scott G."/>
            <person name="Steffen D."/>
            <person name="Worley K.C."/>
            <person name="Burch P.E."/>
            <person name="Okwuonu G."/>
            <person name="Hines S."/>
            <person name="Lewis L."/>
            <person name="Deramo C."/>
            <person name="Delgado O."/>
            <person name="Dugan-Rocha S."/>
            <person name="Miner G."/>
            <person name="Morgan M."/>
            <person name="Hawes A."/>
            <person name="Gill R."/>
            <person name="Holt R.A."/>
            <person name="Adams M.D."/>
            <person name="Amanatides P.G."/>
            <person name="Baden-Tillson H."/>
            <person name="Barnstead M."/>
            <person name="Chin S."/>
            <person name="Evans C.A."/>
            <person name="Ferriera S."/>
            <person name="Fosler C."/>
            <person name="Glodek A."/>
            <person name="Gu Z."/>
            <person name="Jennings D."/>
            <person name="Kraft C.L."/>
            <person name="Nguyen T."/>
            <person name="Pfannkoch C.M."/>
            <person name="Sitter C."/>
            <person name="Sutton G.G."/>
            <person name="Venter J.C."/>
            <person name="Woodage T."/>
            <person name="Smith D."/>
            <person name="Lee H.-M."/>
            <person name="Gustafson E."/>
            <person name="Cahill P."/>
            <person name="Kana A."/>
            <person name="Doucette-Stamm L."/>
            <person name="Weinstock K."/>
            <person name="Fechtel K."/>
            <person name="Weiss R.B."/>
            <person name="Dunn D.M."/>
            <person name="Green E.D."/>
            <person name="Blakesley R.W."/>
            <person name="Bouffard G.G."/>
            <person name="De Jong P.J."/>
            <person name="Osoegawa K."/>
            <person name="Zhu B."/>
            <person name="Marra M."/>
            <person name="Schein J."/>
            <person name="Bosdet I."/>
            <person name="Fjell C."/>
            <person name="Jones S."/>
            <person name="Krzywinski M."/>
            <person name="Mathewson C."/>
            <person name="Siddiqui A."/>
            <person name="Wye N."/>
            <person name="McPherson J."/>
            <person name="Zhao S."/>
            <person name="Fraser C.M."/>
            <person name="Shetty J."/>
            <person name="Shatsman S."/>
            <person name="Geer K."/>
            <person name="Chen Y."/>
            <person name="Abramzon S."/>
            <person name="Nierman W.C."/>
            <person name="Havlak P.H."/>
            <person name="Chen R."/>
            <person name="Durbin K.J."/>
            <person name="Egan A."/>
            <person name="Ren Y."/>
            <person name="Song X.-Z."/>
            <person name="Li B."/>
            <person name="Liu Y."/>
            <person name="Qin X."/>
            <person name="Cawley S."/>
            <person name="Cooney A.J."/>
            <person name="D'Souza L.M."/>
            <person name="Martin K."/>
            <person name="Wu J.Q."/>
            <person name="Gonzalez-Garay M.L."/>
            <person name="Jackson A.R."/>
            <person name="Kalafus K.J."/>
            <person name="McLeod M.P."/>
            <person name="Milosavljevic A."/>
            <person name="Virk D."/>
            <person name="Volkov A."/>
            <person name="Wheeler D.A."/>
            <person name="Zhang Z."/>
            <person name="Bailey J.A."/>
            <person name="Eichler E.E."/>
            <person name="Tuzun E."/>
            <person name="Birney E."/>
            <person name="Mongin E."/>
            <person name="Ureta-Vidal A."/>
            <person name="Woodwark C."/>
            <person name="Zdobnov E."/>
            <person name="Bork P."/>
            <person name="Suyama M."/>
            <person name="Torrents D."/>
            <person name="Alexandersson M."/>
            <person name="Trask B.J."/>
            <person name="Young J.M."/>
            <person name="Huang H."/>
            <person name="Wang H."/>
            <person name="Xing H."/>
            <person name="Daniels S."/>
            <person name="Gietzen D."/>
            <person name="Schmidt J."/>
            <person name="Stevens K."/>
            <person name="Vitt U."/>
            <person name="Wingrove J."/>
            <person name="Camara F."/>
            <person name="Mar Alba M."/>
            <person name="Abril J.F."/>
            <person name="Guigo R."/>
            <person name="Smit A."/>
            <person name="Dubchak I."/>
            <person name="Rubin E.M."/>
            <person name="Couronne O."/>
            <person name="Poliakov A."/>
            <person name="Huebner N."/>
            <person name="Ganten D."/>
            <person name="Goesele C."/>
            <person name="Hummel O."/>
            <person name="Kreitler T."/>
            <person name="Lee Y.-A."/>
            <person name="Monti J."/>
            <person name="Schulz H."/>
            <person name="Zimdahl H."/>
            <person name="Himmelbauer H."/>
            <person name="Lehrach H."/>
            <person name="Jacob H.J."/>
            <person name="Bromberg S."/>
            <person name="Gullings-Handley J."/>
            <person name="Jensen-Seaman M.I."/>
            <person name="Kwitek A.E."/>
            <person name="Lazar J."/>
            <person name="Pasko D."/>
            <person name="Tonellato P.J."/>
            <person name="Twigger S."/>
            <person name="Ponting C.P."/>
            <person name="Duarte J.M."/>
            <person name="Rice S."/>
            <person name="Goodstadt L."/>
            <person name="Beatson S.A."/>
            <person name="Emes R.D."/>
            <person name="Winter E.E."/>
            <person name="Webber C."/>
            <person name="Brandt P."/>
            <person name="Nyakatura G."/>
            <person name="Adetobi M."/>
            <person name="Chiaromonte F."/>
            <person name="Elnitski L."/>
            <person name="Eswara P."/>
            <person name="Hardison R.C."/>
            <person name="Hou M."/>
            <person name="Kolbe D."/>
            <person name="Makova K."/>
            <person name="Miller W."/>
            <person name="Nekrutenko A."/>
            <person name="Riemer C."/>
            <person name="Schwartz S."/>
            <person name="Taylor J."/>
            <person name="Yang S."/>
            <person name="Zhang Y."/>
            <person name="Lindpaintner K."/>
            <person name="Andrews T.D."/>
            <person name="Caccamo M."/>
            <person name="Clamp M."/>
            <person name="Clarke L."/>
            <person name="Curwen V."/>
            <person name="Durbin R.M."/>
            <person name="Eyras E."/>
            <person name="Searle S.M."/>
            <person name="Cooper G.M."/>
            <person name="Batzoglou S."/>
            <person name="Brudno M."/>
            <person name="Sidow A."/>
            <person name="Stone E.A."/>
            <person name="Payseur B.A."/>
            <person name="Bourque G."/>
            <person name="Lopez-Otin C."/>
            <person name="Puente X.S."/>
            <person name="Chakrabarti K."/>
            <person name="Chatterji S."/>
            <person name="Dewey C."/>
            <person name="Pachter L."/>
            <person name="Bray N."/>
            <person name="Yap V.B."/>
            <person name="Caspi A."/>
            <person name="Tesler G."/>
            <person name="Pevzner P.A."/>
            <person name="Haussler D."/>
            <person name="Roskin K.M."/>
            <person name="Baertsch R."/>
            <person name="Clawson H."/>
            <person name="Furey T.S."/>
            <person name="Hinrichs A.S."/>
            <person name="Karolchik D."/>
            <person name="Kent W.J."/>
            <person name="Rosenbloom K.R."/>
            <person name="Trumbower H."/>
            <person name="Weirauch M."/>
            <person name="Cooper D.N."/>
            <person name="Stenson P.D."/>
            <person name="Ma B."/>
            <person name="Brent M."/>
            <person name="Arumugam M."/>
            <person name="Shteynberg D."/>
            <person name="Copley R.R."/>
            <person name="Taylor M.S."/>
            <person name="Riethman H."/>
            <person name="Mudunuri U."/>
            <person name="Peterson J."/>
            <person name="Guyer M."/>
            <person name="Felsenfeld A."/>
            <person name="Old S."/>
            <person name="Mockrin S."/>
            <person name="Collins F.S."/>
        </authorList>
    </citation>
    <scope>NUCLEOTIDE SEQUENCE [LARGE SCALE GENOMIC DNA]</scope>
    <source>
        <strain>Brown Norway</strain>
    </source>
</reference>
<reference key="2">
    <citation type="submission" date="2005-07" db="EMBL/GenBank/DDBJ databases">
        <authorList>
            <person name="Mural R.J."/>
            <person name="Adams M.D."/>
            <person name="Myers E.W."/>
            <person name="Smith H.O."/>
            <person name="Venter J.C."/>
        </authorList>
    </citation>
    <scope>NUCLEOTIDE SEQUENCE [LARGE SCALE GENOMIC DNA]</scope>
</reference>
<reference key="3">
    <citation type="journal article" date="2011" name="J. Neurosci.">
        <title>MicroRNA-137/181c regulates serine palmitoyltransferase and in turn amyloid beta, novel targets in sporadic Alzheimer's disease.</title>
        <authorList>
            <person name="Geekiyanage H."/>
            <person name="Chan C."/>
        </authorList>
    </citation>
    <scope>INDUCTION BY MIRNA</scope>
    <scope>TISSUE SPECIFICITY</scope>
</reference>
<feature type="chain" id="PRO_0000446338" description="Serine palmitoyltransferase 1">
    <location>
        <begin position="1"/>
        <end position="473"/>
    </location>
</feature>
<feature type="topological domain" description="Lumenal" evidence="4">
    <location>
        <begin position="1"/>
        <end position="15"/>
    </location>
</feature>
<feature type="transmembrane region" description="Helical" evidence="4">
    <location>
        <begin position="16"/>
        <end position="36"/>
    </location>
</feature>
<feature type="topological domain" description="Cytoplasmic" evidence="4">
    <location>
        <begin position="37"/>
        <end position="473"/>
    </location>
</feature>
<feature type="region of interest" description="Interaction with SPTLC2" evidence="2">
    <location>
        <begin position="1"/>
        <end position="66"/>
    </location>
</feature>
<feature type="modified residue" description="Phosphotyrosine; by ABL" evidence="2">
    <location>
        <position position="164"/>
    </location>
</feature>
<dbReference type="EC" id="2.3.1.50" evidence="2"/>
<dbReference type="EMBL" id="AABR07027039">
    <property type="status" value="NOT_ANNOTATED_CDS"/>
    <property type="molecule type" value="Genomic_DNA"/>
</dbReference>
<dbReference type="EMBL" id="CH473977">
    <property type="protein sequence ID" value="EDL98057.1"/>
    <property type="molecule type" value="Genomic_DNA"/>
</dbReference>
<dbReference type="RefSeq" id="NP_001101876.1">
    <property type="nucleotide sequence ID" value="NM_001108406.1"/>
</dbReference>
<dbReference type="SMR" id="D4A2H2"/>
<dbReference type="FunCoup" id="D4A2H2">
    <property type="interactions" value="4213"/>
</dbReference>
<dbReference type="STRING" id="10116.ENSRNOP00000014546"/>
<dbReference type="PhosphoSitePlus" id="D4A2H2"/>
<dbReference type="jPOST" id="D4A2H2"/>
<dbReference type="PaxDb" id="10116-ENSRNOP00000014546"/>
<dbReference type="PeptideAtlas" id="D4A2H2"/>
<dbReference type="Ensembl" id="ENSRNOT00000014546.5">
    <property type="protein sequence ID" value="ENSRNOP00000014546.4"/>
    <property type="gene ID" value="ENSRNOG00000010882.5"/>
</dbReference>
<dbReference type="GeneID" id="361213"/>
<dbReference type="KEGG" id="rno:361213"/>
<dbReference type="AGR" id="RGD:1307140"/>
<dbReference type="CTD" id="10558"/>
<dbReference type="RGD" id="1307140">
    <property type="gene designation" value="Sptlc1"/>
</dbReference>
<dbReference type="eggNOG" id="KOG1358">
    <property type="taxonomic scope" value="Eukaryota"/>
</dbReference>
<dbReference type="GeneTree" id="ENSGT00550000074872"/>
<dbReference type="HOGENOM" id="CLU_015846_0_1_1"/>
<dbReference type="InParanoid" id="D4A2H2"/>
<dbReference type="OMA" id="LTKYGCG"/>
<dbReference type="OrthoDB" id="3168162at2759"/>
<dbReference type="PhylomeDB" id="D4A2H2"/>
<dbReference type="TreeFam" id="TF314877"/>
<dbReference type="BRENDA" id="2.3.1.50">
    <property type="organism ID" value="5301"/>
</dbReference>
<dbReference type="Reactome" id="R-RNO-1660661">
    <property type="pathway name" value="Sphingolipid de novo biosynthesis"/>
</dbReference>
<dbReference type="UniPathway" id="UPA00222"/>
<dbReference type="PRO" id="PR:D4A2H2"/>
<dbReference type="Proteomes" id="UP000002494">
    <property type="component" value="Chromosome 17"/>
</dbReference>
<dbReference type="Proteomes" id="UP000234681">
    <property type="component" value="Chromosome 17"/>
</dbReference>
<dbReference type="Bgee" id="ENSRNOG00000010882">
    <property type="expression patterns" value="Expressed in ovary and 20 other cell types or tissues"/>
</dbReference>
<dbReference type="GO" id="GO:0005783">
    <property type="term" value="C:endoplasmic reticulum"/>
    <property type="evidence" value="ECO:0000318"/>
    <property type="project" value="GO_Central"/>
</dbReference>
<dbReference type="GO" id="GO:0005789">
    <property type="term" value="C:endoplasmic reticulum membrane"/>
    <property type="evidence" value="ECO:0000266"/>
    <property type="project" value="RGD"/>
</dbReference>
<dbReference type="GO" id="GO:0017059">
    <property type="term" value="C:serine palmitoyltransferase complex"/>
    <property type="evidence" value="ECO:0000266"/>
    <property type="project" value="RGD"/>
</dbReference>
<dbReference type="GO" id="GO:0030170">
    <property type="term" value="F:pyridoxal phosphate binding"/>
    <property type="evidence" value="ECO:0007669"/>
    <property type="project" value="InterPro"/>
</dbReference>
<dbReference type="GO" id="GO:0004758">
    <property type="term" value="F:serine C-palmitoyltransferase activity"/>
    <property type="evidence" value="ECO:0000266"/>
    <property type="project" value="RGD"/>
</dbReference>
<dbReference type="GO" id="GO:0046513">
    <property type="term" value="P:ceramide biosynthetic process"/>
    <property type="evidence" value="ECO:0000266"/>
    <property type="project" value="RGD"/>
</dbReference>
<dbReference type="GO" id="GO:1904504">
    <property type="term" value="P:positive regulation of lipophagy"/>
    <property type="evidence" value="ECO:0000266"/>
    <property type="project" value="RGD"/>
</dbReference>
<dbReference type="GO" id="GO:1904649">
    <property type="term" value="P:regulation of fat cell apoptotic process"/>
    <property type="evidence" value="ECO:0000266"/>
    <property type="project" value="RGD"/>
</dbReference>
<dbReference type="GO" id="GO:0046511">
    <property type="term" value="P:sphinganine biosynthetic process"/>
    <property type="evidence" value="ECO:0000266"/>
    <property type="project" value="RGD"/>
</dbReference>
<dbReference type="GO" id="GO:0030148">
    <property type="term" value="P:sphingolipid biosynthetic process"/>
    <property type="evidence" value="ECO:0000266"/>
    <property type="project" value="RGD"/>
</dbReference>
<dbReference type="GO" id="GO:0006665">
    <property type="term" value="P:sphingolipid metabolic process"/>
    <property type="evidence" value="ECO:0000266"/>
    <property type="project" value="RGD"/>
</dbReference>
<dbReference type="GO" id="GO:0006686">
    <property type="term" value="P:sphingomyelin biosynthetic process"/>
    <property type="evidence" value="ECO:0000266"/>
    <property type="project" value="RGD"/>
</dbReference>
<dbReference type="GO" id="GO:0046512">
    <property type="term" value="P:sphingosine biosynthetic process"/>
    <property type="evidence" value="ECO:0000266"/>
    <property type="project" value="RGD"/>
</dbReference>
<dbReference type="FunFam" id="3.40.640.10:FF:000049">
    <property type="entry name" value="serine palmitoyltransferase 1 isoform X1"/>
    <property type="match status" value="1"/>
</dbReference>
<dbReference type="Gene3D" id="3.90.1150.10">
    <property type="entry name" value="Aspartate Aminotransferase, domain 1"/>
    <property type="match status" value="1"/>
</dbReference>
<dbReference type="Gene3D" id="3.40.640.10">
    <property type="entry name" value="Type I PLP-dependent aspartate aminotransferase-like (Major domain)"/>
    <property type="match status" value="1"/>
</dbReference>
<dbReference type="InterPro" id="IPR004839">
    <property type="entry name" value="Aminotransferase_I/II_large"/>
</dbReference>
<dbReference type="InterPro" id="IPR050087">
    <property type="entry name" value="AON_synthase_class-II"/>
</dbReference>
<dbReference type="InterPro" id="IPR015424">
    <property type="entry name" value="PyrdxlP-dep_Trfase"/>
</dbReference>
<dbReference type="InterPro" id="IPR015421">
    <property type="entry name" value="PyrdxlP-dep_Trfase_major"/>
</dbReference>
<dbReference type="InterPro" id="IPR015422">
    <property type="entry name" value="PyrdxlP-dep_Trfase_small"/>
</dbReference>
<dbReference type="PANTHER" id="PTHR13693">
    <property type="entry name" value="CLASS II AMINOTRANSFERASE/8-AMINO-7-OXONONANOATE SYNTHASE"/>
    <property type="match status" value="1"/>
</dbReference>
<dbReference type="PANTHER" id="PTHR13693:SF2">
    <property type="entry name" value="SERINE PALMITOYLTRANSFERASE 1"/>
    <property type="match status" value="1"/>
</dbReference>
<dbReference type="Pfam" id="PF00155">
    <property type="entry name" value="Aminotran_1_2"/>
    <property type="match status" value="1"/>
</dbReference>
<dbReference type="SUPFAM" id="SSF53383">
    <property type="entry name" value="PLP-dependent transferases"/>
    <property type="match status" value="1"/>
</dbReference>
<accession>D4A2H2</accession>
<gene>
    <name evidence="7" type="primary">Sptlc1</name>
    <name type="synonym">Lcb1</name>
    <name type="ORF">rCG_44191</name>
</gene>
<name>SPTC1_RAT</name>
<organism>
    <name type="scientific">Rattus norvegicus</name>
    <name type="common">Rat</name>
    <dbReference type="NCBI Taxonomy" id="10116"/>
    <lineage>
        <taxon>Eukaryota</taxon>
        <taxon>Metazoa</taxon>
        <taxon>Chordata</taxon>
        <taxon>Craniata</taxon>
        <taxon>Vertebrata</taxon>
        <taxon>Euteleostomi</taxon>
        <taxon>Mammalia</taxon>
        <taxon>Eutheria</taxon>
        <taxon>Euarchontoglires</taxon>
        <taxon>Glires</taxon>
        <taxon>Rodentia</taxon>
        <taxon>Myomorpha</taxon>
        <taxon>Muroidea</taxon>
        <taxon>Muridae</taxon>
        <taxon>Murinae</taxon>
        <taxon>Rattus</taxon>
    </lineage>
</organism>